<proteinExistence type="inferred from homology"/>
<dbReference type="EMBL" id="AE000520">
    <property type="protein sequence ID" value="AAC65552.1"/>
    <property type="molecule type" value="Genomic_DNA"/>
</dbReference>
<dbReference type="PIR" id="F71306">
    <property type="entry name" value="F71306"/>
</dbReference>
<dbReference type="SMR" id="O83585"/>
<dbReference type="IntAct" id="O83585">
    <property type="interactions" value="1"/>
</dbReference>
<dbReference type="STRING" id="243276.TP_0576"/>
<dbReference type="EnsemblBacteria" id="AAC65552">
    <property type="protein sequence ID" value="AAC65552"/>
    <property type="gene ID" value="TP_0576"/>
</dbReference>
<dbReference type="KEGG" id="tpa:TP_0576"/>
<dbReference type="KEGG" id="tpw:TPANIC_0576"/>
<dbReference type="eggNOG" id="COG1186">
    <property type="taxonomic scope" value="Bacteria"/>
</dbReference>
<dbReference type="HOGENOM" id="CLU_036856_6_0_12"/>
<dbReference type="Proteomes" id="UP000000811">
    <property type="component" value="Chromosome"/>
</dbReference>
<dbReference type="GO" id="GO:0005737">
    <property type="term" value="C:cytoplasm"/>
    <property type="evidence" value="ECO:0007669"/>
    <property type="project" value="UniProtKB-SubCell"/>
</dbReference>
<dbReference type="GO" id="GO:0016149">
    <property type="term" value="F:translation release factor activity, codon specific"/>
    <property type="evidence" value="ECO:0007669"/>
    <property type="project" value="UniProtKB-UniRule"/>
</dbReference>
<dbReference type="FunFam" id="3.30.160.20:FF:000010">
    <property type="entry name" value="Peptide chain release factor 2"/>
    <property type="match status" value="1"/>
</dbReference>
<dbReference type="Gene3D" id="3.30.160.20">
    <property type="match status" value="1"/>
</dbReference>
<dbReference type="Gene3D" id="3.30.70.1660">
    <property type="match status" value="1"/>
</dbReference>
<dbReference type="Gene3D" id="1.20.58.410">
    <property type="entry name" value="Release factor"/>
    <property type="match status" value="1"/>
</dbReference>
<dbReference type="HAMAP" id="MF_00094">
    <property type="entry name" value="Rel_fac_2"/>
    <property type="match status" value="1"/>
</dbReference>
<dbReference type="InterPro" id="IPR005139">
    <property type="entry name" value="PCRF"/>
</dbReference>
<dbReference type="InterPro" id="IPR000352">
    <property type="entry name" value="Pep_chain_release_fac_I"/>
</dbReference>
<dbReference type="InterPro" id="IPR045853">
    <property type="entry name" value="Pep_chain_release_fac_I_sf"/>
</dbReference>
<dbReference type="InterPro" id="IPR004374">
    <property type="entry name" value="PrfB"/>
</dbReference>
<dbReference type="NCBIfam" id="TIGR00020">
    <property type="entry name" value="prfB"/>
    <property type="match status" value="1"/>
</dbReference>
<dbReference type="PANTHER" id="PTHR43116:SF3">
    <property type="entry name" value="CLASS I PEPTIDE CHAIN RELEASE FACTOR"/>
    <property type="match status" value="1"/>
</dbReference>
<dbReference type="PANTHER" id="PTHR43116">
    <property type="entry name" value="PEPTIDE CHAIN RELEASE FACTOR 2"/>
    <property type="match status" value="1"/>
</dbReference>
<dbReference type="Pfam" id="PF03462">
    <property type="entry name" value="PCRF"/>
    <property type="match status" value="1"/>
</dbReference>
<dbReference type="Pfam" id="PF00472">
    <property type="entry name" value="RF-1"/>
    <property type="match status" value="1"/>
</dbReference>
<dbReference type="SMART" id="SM00937">
    <property type="entry name" value="PCRF"/>
    <property type="match status" value="1"/>
</dbReference>
<dbReference type="SUPFAM" id="SSF75620">
    <property type="entry name" value="Release factor"/>
    <property type="match status" value="1"/>
</dbReference>
<dbReference type="PROSITE" id="PS00745">
    <property type="entry name" value="RF_PROK_I"/>
    <property type="match status" value="1"/>
</dbReference>
<gene>
    <name type="primary">prfB</name>
    <name type="ordered locus">TP_0576</name>
</gene>
<protein>
    <recommendedName>
        <fullName>Peptide chain release factor 2</fullName>
        <shortName>RF-2</shortName>
    </recommendedName>
</protein>
<name>RF2_TREPA</name>
<evidence type="ECO:0000250" key="1"/>
<evidence type="ECO:0000305" key="2"/>
<keyword id="KW-0963">Cytoplasm</keyword>
<keyword id="KW-0488">Methylation</keyword>
<keyword id="KW-0648">Protein biosynthesis</keyword>
<keyword id="KW-1185">Reference proteome</keyword>
<reference key="1">
    <citation type="journal article" date="1998" name="Science">
        <title>Complete genome sequence of Treponema pallidum, the syphilis spirochete.</title>
        <authorList>
            <person name="Fraser C.M."/>
            <person name="Norris S.J."/>
            <person name="Weinstock G.M."/>
            <person name="White O."/>
            <person name="Sutton G.G."/>
            <person name="Dodson R.J."/>
            <person name="Gwinn M.L."/>
            <person name="Hickey E.K."/>
            <person name="Clayton R.A."/>
            <person name="Ketchum K.A."/>
            <person name="Sodergren E."/>
            <person name="Hardham J.M."/>
            <person name="McLeod M.P."/>
            <person name="Salzberg S.L."/>
            <person name="Peterson J.D."/>
            <person name="Khalak H.G."/>
            <person name="Richardson D.L."/>
            <person name="Howell J.K."/>
            <person name="Chidambaram M."/>
            <person name="Utterback T.R."/>
            <person name="McDonald L.A."/>
            <person name="Artiach P."/>
            <person name="Bowman C."/>
            <person name="Cotton M.D."/>
            <person name="Fujii C."/>
            <person name="Garland S.A."/>
            <person name="Hatch B."/>
            <person name="Horst K."/>
            <person name="Roberts K.M."/>
            <person name="Sandusky M."/>
            <person name="Weidman J.F."/>
            <person name="Smith H.O."/>
            <person name="Venter J.C."/>
        </authorList>
    </citation>
    <scope>NUCLEOTIDE SEQUENCE [LARGE SCALE GENOMIC DNA]</scope>
    <source>
        <strain>Nichols</strain>
    </source>
</reference>
<feature type="chain" id="PRO_0000166855" description="Peptide chain release factor 2">
    <location>
        <begin position="1"/>
        <end position="368"/>
    </location>
</feature>
<feature type="modified residue" description="N5-methylglutamine" evidence="1">
    <location>
        <position position="245"/>
    </location>
</feature>
<comment type="function">
    <text evidence="1">Peptide chain release factor 2 directs the termination of translation in response to the peptide chain termination codons UGA and UAA.</text>
</comment>
<comment type="subcellular location">
    <subcellularLocation>
        <location evidence="1">Cytoplasm</location>
    </subcellularLocation>
</comment>
<comment type="PTM">
    <text evidence="1">Methylated by PrmC. Methylation increases the termination efficiency of RF2 (By similarity).</text>
</comment>
<comment type="similarity">
    <text evidence="2">Belongs to the prokaryotic/mitochondrial release factor family.</text>
</comment>
<accession>O83585</accession>
<organism>
    <name type="scientific">Treponema pallidum (strain Nichols)</name>
    <dbReference type="NCBI Taxonomy" id="243276"/>
    <lineage>
        <taxon>Bacteria</taxon>
        <taxon>Pseudomonadati</taxon>
        <taxon>Spirochaetota</taxon>
        <taxon>Spirochaetia</taxon>
        <taxon>Spirochaetales</taxon>
        <taxon>Treponemataceae</taxon>
        <taxon>Treponema</taxon>
    </lineage>
</organism>
<sequence length="368" mass="41596">MVHKSPPSRRACRKYGGVFDVAAYEARIATLEAAAAAPDFWSERARAEALLAELKTLRATLEPWRALRRESADLRALYELAREAQDASLEPELSSLFSDISARFEEASLTRLLHEEVDRLDAFVTIHSGAGGVEACDWAQMLMRMYTRWAERRSFCVHIVDLLESEGGVKSVTLKICGSHAFGFLKGETGVHRLVRISPFDSAARRHTSFTSTYVFPVLDDHVEVHIRSEDMRVDTYRSGGAGGQHVNKTDSAVRITHLPTGIVVTCQNERSQISNRATALSLLRARLYAYERQKKQQEHQRFASEKKDISWGNQIRSYVFHPYTMVKDHRSKCETGNIHAVMDGALEPFIRSYLEFLCTSTQCVEPQ</sequence>